<keyword id="KW-0012">Acyltransferase</keyword>
<keyword id="KW-0963">Cytoplasm</keyword>
<keyword id="KW-0441">Lipid A biosynthesis</keyword>
<keyword id="KW-0444">Lipid biosynthesis</keyword>
<keyword id="KW-0443">Lipid metabolism</keyword>
<keyword id="KW-0677">Repeat</keyword>
<keyword id="KW-0808">Transferase</keyword>
<evidence type="ECO:0000255" key="1">
    <source>
        <dbReference type="HAMAP-Rule" id="MF_00387"/>
    </source>
</evidence>
<evidence type="ECO:0000256" key="2">
    <source>
        <dbReference type="SAM" id="MobiDB-lite"/>
    </source>
</evidence>
<accession>Q820F0</accession>
<name>LPXA_CHLCV</name>
<dbReference type="EC" id="2.3.1.129" evidence="1"/>
<dbReference type="EMBL" id="AE015925">
    <property type="protein sequence ID" value="AAP04842.1"/>
    <property type="molecule type" value="Genomic_DNA"/>
</dbReference>
<dbReference type="RefSeq" id="WP_011006063.1">
    <property type="nucleotide sequence ID" value="NC_003361.3"/>
</dbReference>
<dbReference type="SMR" id="Q820F0"/>
<dbReference type="STRING" id="227941.CCA_00090"/>
<dbReference type="KEGG" id="cca:CCA_00090"/>
<dbReference type="eggNOG" id="COG1043">
    <property type="taxonomic scope" value="Bacteria"/>
</dbReference>
<dbReference type="HOGENOM" id="CLU_061249_0_0_0"/>
<dbReference type="OrthoDB" id="9807278at2"/>
<dbReference type="UniPathway" id="UPA00359">
    <property type="reaction ID" value="UER00477"/>
</dbReference>
<dbReference type="Proteomes" id="UP000002193">
    <property type="component" value="Chromosome"/>
</dbReference>
<dbReference type="GO" id="GO:0005737">
    <property type="term" value="C:cytoplasm"/>
    <property type="evidence" value="ECO:0007669"/>
    <property type="project" value="UniProtKB-SubCell"/>
</dbReference>
<dbReference type="GO" id="GO:0016020">
    <property type="term" value="C:membrane"/>
    <property type="evidence" value="ECO:0007669"/>
    <property type="project" value="GOC"/>
</dbReference>
<dbReference type="GO" id="GO:0008780">
    <property type="term" value="F:acyl-[acyl-carrier-protein]-UDP-N-acetylglucosamine O-acyltransferase activity"/>
    <property type="evidence" value="ECO:0007669"/>
    <property type="project" value="UniProtKB-UniRule"/>
</dbReference>
<dbReference type="GO" id="GO:0009245">
    <property type="term" value="P:lipid A biosynthetic process"/>
    <property type="evidence" value="ECO:0007669"/>
    <property type="project" value="UniProtKB-UniRule"/>
</dbReference>
<dbReference type="CDD" id="cd03351">
    <property type="entry name" value="LbH_UDP-GlcNAc_AT"/>
    <property type="match status" value="1"/>
</dbReference>
<dbReference type="Gene3D" id="2.160.10.10">
    <property type="entry name" value="Hexapeptide repeat proteins"/>
    <property type="match status" value="1"/>
</dbReference>
<dbReference type="Gene3D" id="1.20.1180.10">
    <property type="entry name" value="Udp N-acetylglucosamine O-acyltransferase, C-terminal domain"/>
    <property type="match status" value="1"/>
</dbReference>
<dbReference type="HAMAP" id="MF_00387">
    <property type="entry name" value="LpxA"/>
    <property type="match status" value="1"/>
</dbReference>
<dbReference type="InterPro" id="IPR029098">
    <property type="entry name" value="Acetyltransf_C"/>
</dbReference>
<dbReference type="InterPro" id="IPR037157">
    <property type="entry name" value="Acetyltransf_C_sf"/>
</dbReference>
<dbReference type="InterPro" id="IPR001451">
    <property type="entry name" value="Hexapep"/>
</dbReference>
<dbReference type="InterPro" id="IPR018357">
    <property type="entry name" value="Hexapep_transf_CS"/>
</dbReference>
<dbReference type="InterPro" id="IPR010137">
    <property type="entry name" value="Lipid_A_LpxA"/>
</dbReference>
<dbReference type="InterPro" id="IPR011004">
    <property type="entry name" value="Trimer_LpxA-like_sf"/>
</dbReference>
<dbReference type="NCBIfam" id="TIGR01852">
    <property type="entry name" value="lipid_A_lpxA"/>
    <property type="match status" value="1"/>
</dbReference>
<dbReference type="NCBIfam" id="NF003657">
    <property type="entry name" value="PRK05289.1"/>
    <property type="match status" value="1"/>
</dbReference>
<dbReference type="PANTHER" id="PTHR43480">
    <property type="entry name" value="ACYL-[ACYL-CARRIER-PROTEIN]--UDP-N-ACETYLGLUCOSAMINE O-ACYLTRANSFERASE"/>
    <property type="match status" value="1"/>
</dbReference>
<dbReference type="PANTHER" id="PTHR43480:SF1">
    <property type="entry name" value="ACYL-[ACYL-CARRIER-PROTEIN]--UDP-N-ACETYLGLUCOSAMINE O-ACYLTRANSFERASE, MITOCHONDRIAL-RELATED"/>
    <property type="match status" value="1"/>
</dbReference>
<dbReference type="Pfam" id="PF13720">
    <property type="entry name" value="Acetyltransf_11"/>
    <property type="match status" value="1"/>
</dbReference>
<dbReference type="Pfam" id="PF00132">
    <property type="entry name" value="Hexapep"/>
    <property type="match status" value="1"/>
</dbReference>
<dbReference type="PIRSF" id="PIRSF000456">
    <property type="entry name" value="UDP-GlcNAc_acltr"/>
    <property type="match status" value="1"/>
</dbReference>
<dbReference type="SUPFAM" id="SSF51161">
    <property type="entry name" value="Trimeric LpxA-like enzymes"/>
    <property type="match status" value="1"/>
</dbReference>
<dbReference type="PROSITE" id="PS00101">
    <property type="entry name" value="HEXAPEP_TRANSFERASES"/>
    <property type="match status" value="2"/>
</dbReference>
<gene>
    <name evidence="1" type="primary">lpxA</name>
    <name type="ordered locus">CCA_00090</name>
</gene>
<protein>
    <recommendedName>
        <fullName evidence="1">Acyl-[acyl-carrier-protein]--UDP-N-acetylglucosamine O-acyltransferase</fullName>
        <shortName evidence="1">UDP-N-acetylglucosamine acyltransferase</shortName>
        <ecNumber evidence="1">2.3.1.129</ecNumber>
    </recommendedName>
</protein>
<proteinExistence type="inferred from homology"/>
<organism>
    <name type="scientific">Chlamydia caviae (strain ATCC VR-813 / DSM 19441 / 03DC25 / GPIC)</name>
    <name type="common">Chlamydophila caviae</name>
    <dbReference type="NCBI Taxonomy" id="227941"/>
    <lineage>
        <taxon>Bacteria</taxon>
        <taxon>Pseudomonadati</taxon>
        <taxon>Chlamydiota</taxon>
        <taxon>Chlamydiia</taxon>
        <taxon>Chlamydiales</taxon>
        <taxon>Chlamydiaceae</taxon>
        <taxon>Chlamydia/Chlamydophila group</taxon>
        <taxon>Chlamydia</taxon>
    </lineage>
</organism>
<sequence>MTNIHPTAIIEPGAKIGKNVVIEPYVVIKSTVTLCDDVVVKSYAYIDGHTTIGKGTTIWPSAMIGNKPQDLKYQGEKTYVTIGENCEIREFAIITSSTFEGTTVSIGNNCLIMPWAHVAHNCTIGNYVILSNHAQLAGHVVVEDYAIIGGMVGVHQFVRIGAHAMVGALSGIRRDVPPYTIGTGNPYQLGGINKVGLQRRQVPFETRLALIKVFKKVYRSEDSFSESLLEAQEEYGHIPEVQNFIHFCQNPSKRGIERGADKDALQDESVEKEGALVES</sequence>
<comment type="function">
    <text evidence="1">Involved in the biosynthesis of lipid A, a phosphorylated glycolipid that anchors the lipopolysaccharide to the outer membrane of the cell.</text>
</comment>
<comment type="catalytic activity">
    <reaction evidence="1">
        <text>a (3R)-hydroxyacyl-[ACP] + UDP-N-acetyl-alpha-D-glucosamine = a UDP-3-O-[(3R)-3-hydroxyacyl]-N-acetyl-alpha-D-glucosamine + holo-[ACP]</text>
        <dbReference type="Rhea" id="RHEA:67812"/>
        <dbReference type="Rhea" id="RHEA-COMP:9685"/>
        <dbReference type="Rhea" id="RHEA-COMP:9945"/>
        <dbReference type="ChEBI" id="CHEBI:57705"/>
        <dbReference type="ChEBI" id="CHEBI:64479"/>
        <dbReference type="ChEBI" id="CHEBI:78827"/>
        <dbReference type="ChEBI" id="CHEBI:173225"/>
        <dbReference type="EC" id="2.3.1.129"/>
    </reaction>
</comment>
<comment type="pathway">
    <text evidence="1">Glycolipid biosynthesis; lipid IV(A) biosynthesis; lipid IV(A) from (3R)-3-hydroxytetradecanoyl-[acyl-carrier-protein] and UDP-N-acetyl-alpha-D-glucosamine: step 1/6.</text>
</comment>
<comment type="subunit">
    <text evidence="1">Homotrimer.</text>
</comment>
<comment type="subcellular location">
    <subcellularLocation>
        <location evidence="1">Cytoplasm</location>
    </subcellularLocation>
</comment>
<comment type="similarity">
    <text evidence="1">Belongs to the transferase hexapeptide repeat family. LpxA subfamily.</text>
</comment>
<feature type="chain" id="PRO_0000188040" description="Acyl-[acyl-carrier-protein]--UDP-N-acetylglucosamine O-acyltransferase">
    <location>
        <begin position="1"/>
        <end position="279"/>
    </location>
</feature>
<feature type="region of interest" description="Disordered" evidence="2">
    <location>
        <begin position="256"/>
        <end position="279"/>
    </location>
</feature>
<reference key="1">
    <citation type="journal article" date="2003" name="Nucleic Acids Res.">
        <title>Genome sequence of Chlamydophila caviae (Chlamydia psittaci GPIC): examining the role of niche-specific genes in the evolution of the Chlamydiaceae.</title>
        <authorList>
            <person name="Read T.D."/>
            <person name="Myers G.S.A."/>
            <person name="Brunham R.C."/>
            <person name="Nelson W.C."/>
            <person name="Paulsen I.T."/>
            <person name="Heidelberg J.F."/>
            <person name="Holtzapple E.K."/>
            <person name="Khouri H.M."/>
            <person name="Federova N.B."/>
            <person name="Carty H.A."/>
            <person name="Umayam L.A."/>
            <person name="Haft D.H."/>
            <person name="Peterson J.D."/>
            <person name="Beanan M.J."/>
            <person name="White O."/>
            <person name="Salzberg S.L."/>
            <person name="Hsia R.-C."/>
            <person name="McClarty G."/>
            <person name="Rank R.G."/>
            <person name="Bavoil P.M."/>
            <person name="Fraser C.M."/>
        </authorList>
    </citation>
    <scope>NUCLEOTIDE SEQUENCE [LARGE SCALE GENOMIC DNA]</scope>
    <source>
        <strain>ATCC VR-813 / DSM 19441 / 03DC25 / GPIC</strain>
    </source>
</reference>